<accession>A9M2W8</accession>
<keyword id="KW-0686">Riboflavin biosynthesis</keyword>
<keyword id="KW-0808">Transferase</keyword>
<name>RISB_NEIM0</name>
<gene>
    <name evidence="1" type="primary">ribH</name>
    <name type="ordered locus">NMCC_0641</name>
</gene>
<evidence type="ECO:0000255" key="1">
    <source>
        <dbReference type="HAMAP-Rule" id="MF_00178"/>
    </source>
</evidence>
<dbReference type="EC" id="2.5.1.78" evidence="1"/>
<dbReference type="EMBL" id="CP000381">
    <property type="protein sequence ID" value="ABX72837.1"/>
    <property type="molecule type" value="Genomic_DNA"/>
</dbReference>
<dbReference type="RefSeq" id="WP_002222781.1">
    <property type="nucleotide sequence ID" value="NC_010120.1"/>
</dbReference>
<dbReference type="SMR" id="A9M2W8"/>
<dbReference type="GeneID" id="93386490"/>
<dbReference type="KEGG" id="nmn:NMCC_0641"/>
<dbReference type="HOGENOM" id="CLU_089358_1_2_4"/>
<dbReference type="UniPathway" id="UPA00275">
    <property type="reaction ID" value="UER00404"/>
</dbReference>
<dbReference type="Proteomes" id="UP000001177">
    <property type="component" value="Chromosome"/>
</dbReference>
<dbReference type="GO" id="GO:0005829">
    <property type="term" value="C:cytosol"/>
    <property type="evidence" value="ECO:0007669"/>
    <property type="project" value="TreeGrafter"/>
</dbReference>
<dbReference type="GO" id="GO:0009349">
    <property type="term" value="C:riboflavin synthase complex"/>
    <property type="evidence" value="ECO:0007669"/>
    <property type="project" value="InterPro"/>
</dbReference>
<dbReference type="GO" id="GO:0000906">
    <property type="term" value="F:6,7-dimethyl-8-ribityllumazine synthase activity"/>
    <property type="evidence" value="ECO:0007669"/>
    <property type="project" value="UniProtKB-UniRule"/>
</dbReference>
<dbReference type="GO" id="GO:0009231">
    <property type="term" value="P:riboflavin biosynthetic process"/>
    <property type="evidence" value="ECO:0007669"/>
    <property type="project" value="UniProtKB-UniRule"/>
</dbReference>
<dbReference type="CDD" id="cd09209">
    <property type="entry name" value="Lumazine_synthase-I"/>
    <property type="match status" value="1"/>
</dbReference>
<dbReference type="FunFam" id="3.40.50.960:FF:000006">
    <property type="entry name" value="6,7-dimethyl-8-ribityllumazine synthase"/>
    <property type="match status" value="1"/>
</dbReference>
<dbReference type="Gene3D" id="3.40.50.960">
    <property type="entry name" value="Lumazine/riboflavin synthase"/>
    <property type="match status" value="1"/>
</dbReference>
<dbReference type="HAMAP" id="MF_00178">
    <property type="entry name" value="Lumazine_synth"/>
    <property type="match status" value="1"/>
</dbReference>
<dbReference type="InterPro" id="IPR034964">
    <property type="entry name" value="LS"/>
</dbReference>
<dbReference type="InterPro" id="IPR002180">
    <property type="entry name" value="LS/RS"/>
</dbReference>
<dbReference type="InterPro" id="IPR036467">
    <property type="entry name" value="LS/RS_sf"/>
</dbReference>
<dbReference type="NCBIfam" id="TIGR00114">
    <property type="entry name" value="lumazine-synth"/>
    <property type="match status" value="1"/>
</dbReference>
<dbReference type="PANTHER" id="PTHR21058:SF0">
    <property type="entry name" value="6,7-DIMETHYL-8-RIBITYLLUMAZINE SYNTHASE"/>
    <property type="match status" value="1"/>
</dbReference>
<dbReference type="PANTHER" id="PTHR21058">
    <property type="entry name" value="6,7-DIMETHYL-8-RIBITYLLUMAZINE SYNTHASE DMRL SYNTHASE LUMAZINE SYNTHASE"/>
    <property type="match status" value="1"/>
</dbReference>
<dbReference type="Pfam" id="PF00885">
    <property type="entry name" value="DMRL_synthase"/>
    <property type="match status" value="1"/>
</dbReference>
<dbReference type="SUPFAM" id="SSF52121">
    <property type="entry name" value="Lumazine synthase"/>
    <property type="match status" value="1"/>
</dbReference>
<sequence length="158" mass="17073">MNTIAPNLDGKHLRIGIVQARFTNEIGSEMLKVCCRTLQELGVADENITVATVPGALEIPIALMNFASSEKFDALIAIGVVIRGETYHFELVSNESGAGVSRVALDYNIPIANAVLTTENDAQAIERIEEKASDAAKVAVECANLVNLLLEEQFEDEE</sequence>
<feature type="chain" id="PRO_1000077240" description="6,7-dimethyl-8-ribityllumazine synthase">
    <location>
        <begin position="1"/>
        <end position="158"/>
    </location>
</feature>
<feature type="active site" description="Proton donor" evidence="1">
    <location>
        <position position="88"/>
    </location>
</feature>
<feature type="binding site" evidence="1">
    <location>
        <position position="22"/>
    </location>
    <ligand>
        <name>5-amino-6-(D-ribitylamino)uracil</name>
        <dbReference type="ChEBI" id="CHEBI:15934"/>
    </ligand>
</feature>
<feature type="binding site" evidence="1">
    <location>
        <begin position="56"/>
        <end position="58"/>
    </location>
    <ligand>
        <name>5-amino-6-(D-ribitylamino)uracil</name>
        <dbReference type="ChEBI" id="CHEBI:15934"/>
    </ligand>
</feature>
<feature type="binding site" evidence="1">
    <location>
        <begin position="80"/>
        <end position="82"/>
    </location>
    <ligand>
        <name>5-amino-6-(D-ribitylamino)uracil</name>
        <dbReference type="ChEBI" id="CHEBI:15934"/>
    </ligand>
</feature>
<feature type="binding site" evidence="1">
    <location>
        <begin position="85"/>
        <end position="86"/>
    </location>
    <ligand>
        <name>(2S)-2-hydroxy-3-oxobutyl phosphate</name>
        <dbReference type="ChEBI" id="CHEBI:58830"/>
    </ligand>
</feature>
<feature type="binding site" evidence="1">
    <location>
        <position position="113"/>
    </location>
    <ligand>
        <name>5-amino-6-(D-ribitylamino)uracil</name>
        <dbReference type="ChEBI" id="CHEBI:15934"/>
    </ligand>
</feature>
<feature type="binding site" evidence="1">
    <location>
        <position position="127"/>
    </location>
    <ligand>
        <name>(2S)-2-hydroxy-3-oxobutyl phosphate</name>
        <dbReference type="ChEBI" id="CHEBI:58830"/>
    </ligand>
</feature>
<proteinExistence type="inferred from homology"/>
<comment type="function">
    <text evidence="1">Catalyzes the formation of 6,7-dimethyl-8-ribityllumazine by condensation of 5-amino-6-(D-ribitylamino)uracil with 3,4-dihydroxy-2-butanone 4-phosphate. This is the penultimate step in the biosynthesis of riboflavin.</text>
</comment>
<comment type="catalytic activity">
    <reaction evidence="1">
        <text>(2S)-2-hydroxy-3-oxobutyl phosphate + 5-amino-6-(D-ribitylamino)uracil = 6,7-dimethyl-8-(1-D-ribityl)lumazine + phosphate + 2 H2O + H(+)</text>
        <dbReference type="Rhea" id="RHEA:26152"/>
        <dbReference type="ChEBI" id="CHEBI:15377"/>
        <dbReference type="ChEBI" id="CHEBI:15378"/>
        <dbReference type="ChEBI" id="CHEBI:15934"/>
        <dbReference type="ChEBI" id="CHEBI:43474"/>
        <dbReference type="ChEBI" id="CHEBI:58201"/>
        <dbReference type="ChEBI" id="CHEBI:58830"/>
        <dbReference type="EC" id="2.5.1.78"/>
    </reaction>
</comment>
<comment type="pathway">
    <text evidence="1">Cofactor biosynthesis; riboflavin biosynthesis; riboflavin from 2-hydroxy-3-oxobutyl phosphate and 5-amino-6-(D-ribitylamino)uracil: step 1/2.</text>
</comment>
<comment type="similarity">
    <text evidence="1">Belongs to the DMRL synthase family.</text>
</comment>
<reference key="1">
    <citation type="journal article" date="2008" name="Genomics">
        <title>Characterization of ST-4821 complex, a unique Neisseria meningitidis clone.</title>
        <authorList>
            <person name="Peng J."/>
            <person name="Yang L."/>
            <person name="Yang F."/>
            <person name="Yang J."/>
            <person name="Yan Y."/>
            <person name="Nie H."/>
            <person name="Zhang X."/>
            <person name="Xiong Z."/>
            <person name="Jiang Y."/>
            <person name="Cheng F."/>
            <person name="Xu X."/>
            <person name="Chen S."/>
            <person name="Sun L."/>
            <person name="Li W."/>
            <person name="Shen Y."/>
            <person name="Shao Z."/>
            <person name="Liang X."/>
            <person name="Xu J."/>
            <person name="Jin Q."/>
        </authorList>
    </citation>
    <scope>NUCLEOTIDE SEQUENCE [LARGE SCALE GENOMIC DNA]</scope>
    <source>
        <strain>053442</strain>
    </source>
</reference>
<protein>
    <recommendedName>
        <fullName evidence="1">6,7-dimethyl-8-ribityllumazine synthase</fullName>
        <shortName evidence="1">DMRL synthase</shortName>
        <shortName evidence="1">LS</shortName>
        <shortName evidence="1">Lumazine synthase</shortName>
        <ecNumber evidence="1">2.5.1.78</ecNumber>
    </recommendedName>
</protein>
<organism>
    <name type="scientific">Neisseria meningitidis serogroup C (strain 053442)</name>
    <dbReference type="NCBI Taxonomy" id="374833"/>
    <lineage>
        <taxon>Bacteria</taxon>
        <taxon>Pseudomonadati</taxon>
        <taxon>Pseudomonadota</taxon>
        <taxon>Betaproteobacteria</taxon>
        <taxon>Neisseriales</taxon>
        <taxon>Neisseriaceae</taxon>
        <taxon>Neisseria</taxon>
    </lineage>
</organism>